<name>RS12_PARPJ</name>
<comment type="function">
    <text evidence="2">With S4 and S5 plays an important role in translational accuracy.</text>
</comment>
<comment type="function">
    <text evidence="2">Interacts with and stabilizes bases of the 16S rRNA that are involved in tRNA selection in the A site and with the mRNA backbone. Located at the interface of the 30S and 50S subunits, it traverses the body of the 30S subunit contacting proteins on the other side and probably holding the rRNA structure together. The combined cluster of proteins S8, S12 and S17 appears to hold together the shoulder and platform of the 30S subunit.</text>
</comment>
<comment type="subunit">
    <text evidence="2">Part of the 30S ribosomal subunit. Contacts proteins S8 and S17. May interact with IF1 in the 30S initiation complex.</text>
</comment>
<comment type="similarity">
    <text evidence="2">Belongs to the universal ribosomal protein uS12 family.</text>
</comment>
<protein>
    <recommendedName>
        <fullName evidence="2">Small ribosomal subunit protein uS12</fullName>
    </recommendedName>
    <alternativeName>
        <fullName evidence="4">30S ribosomal protein S12</fullName>
    </alternativeName>
</protein>
<gene>
    <name evidence="2" type="primary">rpsL</name>
    <name type="ordered locus">Bphyt_3649</name>
</gene>
<sequence length="126" mass="13985">MPTINQLVRKGRQSETTKSKSPALQDCPQRRGVCTRVYTTTPKKPNSALRKVAKVRLTNGFEVISYIGGEGHNLQEHSVVLIRGGRVKDLPGVRYHMVRGSLDTQGVKDRKQARSKYGAKRAKAGK</sequence>
<feature type="chain" id="PRO_1000194140" description="Small ribosomal subunit protein uS12">
    <location>
        <begin position="1"/>
        <end position="126"/>
    </location>
</feature>
<feature type="region of interest" description="Disordered" evidence="3">
    <location>
        <begin position="1"/>
        <end position="28"/>
    </location>
</feature>
<feature type="region of interest" description="Disordered" evidence="3">
    <location>
        <begin position="103"/>
        <end position="126"/>
    </location>
</feature>
<feature type="compositionally biased region" description="Basic residues" evidence="3">
    <location>
        <begin position="113"/>
        <end position="126"/>
    </location>
</feature>
<feature type="modified residue" description="3-methylthioaspartic acid" evidence="1">
    <location>
        <position position="89"/>
    </location>
</feature>
<dbReference type="EMBL" id="CP001052">
    <property type="protein sequence ID" value="ACD18039.1"/>
    <property type="molecule type" value="Genomic_DNA"/>
</dbReference>
<dbReference type="RefSeq" id="WP_012434574.1">
    <property type="nucleotide sequence ID" value="NC_010681.1"/>
</dbReference>
<dbReference type="SMR" id="B2T756"/>
<dbReference type="STRING" id="398527.Bphyt_3649"/>
<dbReference type="GeneID" id="97311161"/>
<dbReference type="KEGG" id="bpy:Bphyt_3649"/>
<dbReference type="eggNOG" id="COG0048">
    <property type="taxonomic scope" value="Bacteria"/>
</dbReference>
<dbReference type="HOGENOM" id="CLU_104295_1_2_4"/>
<dbReference type="OrthoDB" id="9802366at2"/>
<dbReference type="Proteomes" id="UP000001739">
    <property type="component" value="Chromosome 1"/>
</dbReference>
<dbReference type="GO" id="GO:0015935">
    <property type="term" value="C:small ribosomal subunit"/>
    <property type="evidence" value="ECO:0007669"/>
    <property type="project" value="InterPro"/>
</dbReference>
<dbReference type="GO" id="GO:0019843">
    <property type="term" value="F:rRNA binding"/>
    <property type="evidence" value="ECO:0007669"/>
    <property type="project" value="UniProtKB-UniRule"/>
</dbReference>
<dbReference type="GO" id="GO:0003735">
    <property type="term" value="F:structural constituent of ribosome"/>
    <property type="evidence" value="ECO:0007669"/>
    <property type="project" value="InterPro"/>
</dbReference>
<dbReference type="GO" id="GO:0000049">
    <property type="term" value="F:tRNA binding"/>
    <property type="evidence" value="ECO:0007669"/>
    <property type="project" value="UniProtKB-UniRule"/>
</dbReference>
<dbReference type="GO" id="GO:0006412">
    <property type="term" value="P:translation"/>
    <property type="evidence" value="ECO:0007669"/>
    <property type="project" value="UniProtKB-UniRule"/>
</dbReference>
<dbReference type="CDD" id="cd03368">
    <property type="entry name" value="Ribosomal_S12"/>
    <property type="match status" value="1"/>
</dbReference>
<dbReference type="FunFam" id="2.40.50.140:FF:000001">
    <property type="entry name" value="30S ribosomal protein S12"/>
    <property type="match status" value="1"/>
</dbReference>
<dbReference type="Gene3D" id="2.40.50.140">
    <property type="entry name" value="Nucleic acid-binding proteins"/>
    <property type="match status" value="1"/>
</dbReference>
<dbReference type="HAMAP" id="MF_00403_B">
    <property type="entry name" value="Ribosomal_uS12_B"/>
    <property type="match status" value="1"/>
</dbReference>
<dbReference type="InterPro" id="IPR012340">
    <property type="entry name" value="NA-bd_OB-fold"/>
</dbReference>
<dbReference type="InterPro" id="IPR006032">
    <property type="entry name" value="Ribosomal_uS12"/>
</dbReference>
<dbReference type="InterPro" id="IPR005679">
    <property type="entry name" value="Ribosomal_uS12_bac"/>
</dbReference>
<dbReference type="NCBIfam" id="TIGR00981">
    <property type="entry name" value="rpsL_bact"/>
    <property type="match status" value="1"/>
</dbReference>
<dbReference type="PANTHER" id="PTHR11652">
    <property type="entry name" value="30S RIBOSOMAL PROTEIN S12 FAMILY MEMBER"/>
    <property type="match status" value="1"/>
</dbReference>
<dbReference type="Pfam" id="PF00164">
    <property type="entry name" value="Ribosom_S12_S23"/>
    <property type="match status" value="1"/>
</dbReference>
<dbReference type="PIRSF" id="PIRSF002133">
    <property type="entry name" value="Ribosomal_S12/S23"/>
    <property type="match status" value="1"/>
</dbReference>
<dbReference type="PRINTS" id="PR01034">
    <property type="entry name" value="RIBOSOMALS12"/>
</dbReference>
<dbReference type="SUPFAM" id="SSF50249">
    <property type="entry name" value="Nucleic acid-binding proteins"/>
    <property type="match status" value="1"/>
</dbReference>
<dbReference type="PROSITE" id="PS00055">
    <property type="entry name" value="RIBOSOMAL_S12"/>
    <property type="match status" value="1"/>
</dbReference>
<keyword id="KW-0488">Methylation</keyword>
<keyword id="KW-0687">Ribonucleoprotein</keyword>
<keyword id="KW-0689">Ribosomal protein</keyword>
<keyword id="KW-0694">RNA-binding</keyword>
<keyword id="KW-0699">rRNA-binding</keyword>
<keyword id="KW-0820">tRNA-binding</keyword>
<proteinExistence type="inferred from homology"/>
<accession>B2T756</accession>
<evidence type="ECO:0000250" key="1"/>
<evidence type="ECO:0000255" key="2">
    <source>
        <dbReference type="HAMAP-Rule" id="MF_00403"/>
    </source>
</evidence>
<evidence type="ECO:0000256" key="3">
    <source>
        <dbReference type="SAM" id="MobiDB-lite"/>
    </source>
</evidence>
<evidence type="ECO:0000305" key="4"/>
<organism>
    <name type="scientific">Paraburkholderia phytofirmans (strain DSM 17436 / LMG 22146 / PsJN)</name>
    <name type="common">Burkholderia phytofirmans</name>
    <dbReference type="NCBI Taxonomy" id="398527"/>
    <lineage>
        <taxon>Bacteria</taxon>
        <taxon>Pseudomonadati</taxon>
        <taxon>Pseudomonadota</taxon>
        <taxon>Betaproteobacteria</taxon>
        <taxon>Burkholderiales</taxon>
        <taxon>Burkholderiaceae</taxon>
        <taxon>Paraburkholderia</taxon>
    </lineage>
</organism>
<reference key="1">
    <citation type="journal article" date="2011" name="J. Bacteriol.">
        <title>Complete genome sequence of the plant growth-promoting endophyte Burkholderia phytofirmans strain PsJN.</title>
        <authorList>
            <person name="Weilharter A."/>
            <person name="Mitter B."/>
            <person name="Shin M.V."/>
            <person name="Chain P.S."/>
            <person name="Nowak J."/>
            <person name="Sessitsch A."/>
        </authorList>
    </citation>
    <scope>NUCLEOTIDE SEQUENCE [LARGE SCALE GENOMIC DNA]</scope>
    <source>
        <strain>DSM 17436 / LMG 22146 / PsJN</strain>
    </source>
</reference>